<sequence length="1120" mass="128709">MWLKPEEVLLKNALKLWLMERSNDYFVLQRRRGYGEEGGGGLTGLLVGTLDSVLDSTAKVAPFRILHQTPDSQVYLSIACGANREEITKHWDWLEQNIMKTLSVFDSNEDITNFVQGKIRGLIAEEGKHCFAKEDDPEKFREALLKFEKCFGLPEKEKLVTYYSCSYWKGRVPCQGWLYLSTNFLSFYSFLLGSEIKLIISWDEVSKLEKTSNVILTESIHVCSQGENHYFSMFLHINQTYLLMEQLANYAIRRLFDKETFDNDPVLYNPLQITKRGLENRAHSEQFNAFFRLPKGESLKEVHECFLWVPFSHFNTHGKMCISENYICFASQDGNQCSVIIPLREVLAIDKTNDSSKSVIISIKGKTAFRFHEVKDFEQLVAKLRLRCGAASTQYHDISTELAISSESTEPSDNFEVQSLTSQRECSKTVNTEALMTVFHPQNLETLNSKMLKEKMKEQSWKILFAECGRGVSMFRTKKTRDLVVRGIPETLRGELWMLFSGAVNDMATNPDYYTEVVEQSLGTCNLATEEIERDLRRSLPEHPAFQSDTGISALRRVLTAYAYRNPKIGYCQAMNILTSVLLLYAKEEEAFWLLVAVCERMLPDYFNRRIIGALVDQAVFEELIRDHLPQLTEHMTDMTFFSSVSLSWFLTLFISVLPIESAVNVVDCFFYDGIKAILQLGLAILDYNLDKLLTCKDDAEAVTALNRFFDNVTNKDSPLPSNVQQGSNVSDEKTSHTRVDITDLIRESNEKYGNIRYEDIHSMRCRNRLYVIQTLEETTKQNVLRVVSQDVKLSLQELDELYVIFKKELFLSCYWCLGCPVLKHHDPSLPYLEQYQIDCQQFRALYHLLSPWAHSANKDSLALWTFRLLDENSDCLINFKEFSSAIDIMYNGSFTEKLKLLFKLHIPPAYTEVKSKDASKGDELSKEELLYFSQLHVSKPANEKEAESAKHSPEKGKGKIDIQAYLSQWQDELFKKEENIKDLPRMNQSQFIQFSKTLYNLFHEDPEEESLYQAIAVVTSLLLRMEEVGRKLHSPTSSAKGFSGTVCGSGGPSEEKTGSHLEKDPCSFREEPQWSFAFEQILASLLNEPALVRFFEKPIDVKAKLENARISQLRSRTKM</sequence>
<keyword id="KW-0025">Alternative splicing</keyword>
<keyword id="KW-0963">Cytoplasm</keyword>
<keyword id="KW-0225">Disease variant</keyword>
<keyword id="KW-0343">GTPase activation</keyword>
<keyword id="KW-1267">Proteomics identification</keyword>
<keyword id="KW-1185">Reference proteome</keyword>
<keyword id="KW-0677">Repeat</keyword>
<reference key="1">
    <citation type="journal article" date="2009" name="Genes Cells">
        <title>Identification and characterization of a novel Tre-2/Bub2/Cdc16 (TBC) protein that possesses Rab3A-GAP activity.</title>
        <authorList>
            <person name="Ishibashi K."/>
            <person name="Kanno E."/>
            <person name="Itoh T."/>
            <person name="Fukuda M."/>
        </authorList>
    </citation>
    <scope>NUCLEOTIDE SEQUENCE [MRNA] (ISOFORMS 1 AND 3)</scope>
    <source>
        <tissue>Brain</tissue>
    </source>
</reference>
<reference key="2">
    <citation type="journal article" date="2004" name="Nat. Genet.">
        <title>Complete sequencing and characterization of 21,243 full-length human cDNAs.</title>
        <authorList>
            <person name="Ota T."/>
            <person name="Suzuki Y."/>
            <person name="Nishikawa T."/>
            <person name="Otsuki T."/>
            <person name="Sugiyama T."/>
            <person name="Irie R."/>
            <person name="Wakamatsu A."/>
            <person name="Hayashi K."/>
            <person name="Sato H."/>
            <person name="Nagai K."/>
            <person name="Kimura K."/>
            <person name="Makita H."/>
            <person name="Sekine M."/>
            <person name="Obayashi M."/>
            <person name="Nishi T."/>
            <person name="Shibahara T."/>
            <person name="Tanaka T."/>
            <person name="Ishii S."/>
            <person name="Yamamoto J."/>
            <person name="Saito K."/>
            <person name="Kawai Y."/>
            <person name="Isono Y."/>
            <person name="Nakamura Y."/>
            <person name="Nagahari K."/>
            <person name="Murakami K."/>
            <person name="Yasuda T."/>
            <person name="Iwayanagi T."/>
            <person name="Wagatsuma M."/>
            <person name="Shiratori A."/>
            <person name="Sudo H."/>
            <person name="Hosoiri T."/>
            <person name="Kaku Y."/>
            <person name="Kodaira H."/>
            <person name="Kondo H."/>
            <person name="Sugawara M."/>
            <person name="Takahashi M."/>
            <person name="Kanda K."/>
            <person name="Yokoi T."/>
            <person name="Furuya T."/>
            <person name="Kikkawa E."/>
            <person name="Omura Y."/>
            <person name="Abe K."/>
            <person name="Kamihara K."/>
            <person name="Katsuta N."/>
            <person name="Sato K."/>
            <person name="Tanikawa M."/>
            <person name="Yamazaki M."/>
            <person name="Ninomiya K."/>
            <person name="Ishibashi T."/>
            <person name="Yamashita H."/>
            <person name="Murakawa K."/>
            <person name="Fujimori K."/>
            <person name="Tanai H."/>
            <person name="Kimata M."/>
            <person name="Watanabe M."/>
            <person name="Hiraoka S."/>
            <person name="Chiba Y."/>
            <person name="Ishida S."/>
            <person name="Ono Y."/>
            <person name="Takiguchi S."/>
            <person name="Watanabe S."/>
            <person name="Yosida M."/>
            <person name="Hotuta T."/>
            <person name="Kusano J."/>
            <person name="Kanehori K."/>
            <person name="Takahashi-Fujii A."/>
            <person name="Hara H."/>
            <person name="Tanase T.-O."/>
            <person name="Nomura Y."/>
            <person name="Togiya S."/>
            <person name="Komai F."/>
            <person name="Hara R."/>
            <person name="Takeuchi K."/>
            <person name="Arita M."/>
            <person name="Imose N."/>
            <person name="Musashino K."/>
            <person name="Yuuki H."/>
            <person name="Oshima A."/>
            <person name="Sasaki N."/>
            <person name="Aotsuka S."/>
            <person name="Yoshikawa Y."/>
            <person name="Matsunawa H."/>
            <person name="Ichihara T."/>
            <person name="Shiohata N."/>
            <person name="Sano S."/>
            <person name="Moriya S."/>
            <person name="Momiyama H."/>
            <person name="Satoh N."/>
            <person name="Takami S."/>
            <person name="Terashima Y."/>
            <person name="Suzuki O."/>
            <person name="Nakagawa S."/>
            <person name="Senoh A."/>
            <person name="Mizoguchi H."/>
            <person name="Goto Y."/>
            <person name="Shimizu F."/>
            <person name="Wakebe H."/>
            <person name="Hishigaki H."/>
            <person name="Watanabe T."/>
            <person name="Sugiyama A."/>
            <person name="Takemoto M."/>
            <person name="Kawakami B."/>
            <person name="Yamazaki M."/>
            <person name="Watanabe K."/>
            <person name="Kumagai A."/>
            <person name="Itakura S."/>
            <person name="Fukuzumi Y."/>
            <person name="Fujimori Y."/>
            <person name="Komiyama M."/>
            <person name="Tashiro H."/>
            <person name="Tanigami A."/>
            <person name="Fujiwara T."/>
            <person name="Ono T."/>
            <person name="Yamada K."/>
            <person name="Fujii Y."/>
            <person name="Ozaki K."/>
            <person name="Hirao M."/>
            <person name="Ohmori Y."/>
            <person name="Kawabata A."/>
            <person name="Hikiji T."/>
            <person name="Kobatake N."/>
            <person name="Inagaki H."/>
            <person name="Ikema Y."/>
            <person name="Okamoto S."/>
            <person name="Okitani R."/>
            <person name="Kawakami T."/>
            <person name="Noguchi S."/>
            <person name="Itoh T."/>
            <person name="Shigeta K."/>
            <person name="Senba T."/>
            <person name="Matsumura K."/>
            <person name="Nakajima Y."/>
            <person name="Mizuno T."/>
            <person name="Morinaga M."/>
            <person name="Sasaki M."/>
            <person name="Togashi T."/>
            <person name="Oyama M."/>
            <person name="Hata H."/>
            <person name="Watanabe M."/>
            <person name="Komatsu T."/>
            <person name="Mizushima-Sugano J."/>
            <person name="Satoh T."/>
            <person name="Shirai Y."/>
            <person name="Takahashi Y."/>
            <person name="Nakagawa K."/>
            <person name="Okumura K."/>
            <person name="Nagase T."/>
            <person name="Nomura N."/>
            <person name="Kikuchi H."/>
            <person name="Masuho Y."/>
            <person name="Yamashita R."/>
            <person name="Nakai K."/>
            <person name="Yada T."/>
            <person name="Nakamura Y."/>
            <person name="Ohara O."/>
            <person name="Isogai T."/>
            <person name="Sugano S."/>
        </authorList>
    </citation>
    <scope>NUCLEOTIDE SEQUENCE [LARGE SCALE MRNA] (ISOFORM 2)</scope>
    <scope>NUCLEOTIDE SEQUENCE [LARGE SCALE MRNA] OF 806-1120 (ISOFORM 1)</scope>
    <source>
        <tissue>Hepatoma</tissue>
        <tissue>Pulmonary artery</tissue>
    </source>
</reference>
<reference key="3">
    <citation type="journal article" date="2005" name="Nature">
        <title>The DNA sequence of the human X chromosome.</title>
        <authorList>
            <person name="Ross M.T."/>
            <person name="Grafham D.V."/>
            <person name="Coffey A.J."/>
            <person name="Scherer S."/>
            <person name="McLay K."/>
            <person name="Muzny D."/>
            <person name="Platzer M."/>
            <person name="Howell G.R."/>
            <person name="Burrows C."/>
            <person name="Bird C.P."/>
            <person name="Frankish A."/>
            <person name="Lovell F.L."/>
            <person name="Howe K.L."/>
            <person name="Ashurst J.L."/>
            <person name="Fulton R.S."/>
            <person name="Sudbrak R."/>
            <person name="Wen G."/>
            <person name="Jones M.C."/>
            <person name="Hurles M.E."/>
            <person name="Andrews T.D."/>
            <person name="Scott C.E."/>
            <person name="Searle S."/>
            <person name="Ramser J."/>
            <person name="Whittaker A."/>
            <person name="Deadman R."/>
            <person name="Carter N.P."/>
            <person name="Hunt S.E."/>
            <person name="Chen R."/>
            <person name="Cree A."/>
            <person name="Gunaratne P."/>
            <person name="Havlak P."/>
            <person name="Hodgson A."/>
            <person name="Metzker M.L."/>
            <person name="Richards S."/>
            <person name="Scott G."/>
            <person name="Steffen D."/>
            <person name="Sodergren E."/>
            <person name="Wheeler D.A."/>
            <person name="Worley K.C."/>
            <person name="Ainscough R."/>
            <person name="Ambrose K.D."/>
            <person name="Ansari-Lari M.A."/>
            <person name="Aradhya S."/>
            <person name="Ashwell R.I."/>
            <person name="Babbage A.K."/>
            <person name="Bagguley C.L."/>
            <person name="Ballabio A."/>
            <person name="Banerjee R."/>
            <person name="Barker G.E."/>
            <person name="Barlow K.F."/>
            <person name="Barrett I.P."/>
            <person name="Bates K.N."/>
            <person name="Beare D.M."/>
            <person name="Beasley H."/>
            <person name="Beasley O."/>
            <person name="Beck A."/>
            <person name="Bethel G."/>
            <person name="Blechschmidt K."/>
            <person name="Brady N."/>
            <person name="Bray-Allen S."/>
            <person name="Bridgeman A.M."/>
            <person name="Brown A.J."/>
            <person name="Brown M.J."/>
            <person name="Bonnin D."/>
            <person name="Bruford E.A."/>
            <person name="Buhay C."/>
            <person name="Burch P."/>
            <person name="Burford D."/>
            <person name="Burgess J."/>
            <person name="Burrill W."/>
            <person name="Burton J."/>
            <person name="Bye J.M."/>
            <person name="Carder C."/>
            <person name="Carrel L."/>
            <person name="Chako J."/>
            <person name="Chapman J.C."/>
            <person name="Chavez D."/>
            <person name="Chen E."/>
            <person name="Chen G."/>
            <person name="Chen Y."/>
            <person name="Chen Z."/>
            <person name="Chinault C."/>
            <person name="Ciccodicola A."/>
            <person name="Clark S.Y."/>
            <person name="Clarke G."/>
            <person name="Clee C.M."/>
            <person name="Clegg S."/>
            <person name="Clerc-Blankenburg K."/>
            <person name="Clifford K."/>
            <person name="Cobley V."/>
            <person name="Cole C.G."/>
            <person name="Conquer J.S."/>
            <person name="Corby N."/>
            <person name="Connor R.E."/>
            <person name="David R."/>
            <person name="Davies J."/>
            <person name="Davis C."/>
            <person name="Davis J."/>
            <person name="Delgado O."/>
            <person name="Deshazo D."/>
            <person name="Dhami P."/>
            <person name="Ding Y."/>
            <person name="Dinh H."/>
            <person name="Dodsworth S."/>
            <person name="Draper H."/>
            <person name="Dugan-Rocha S."/>
            <person name="Dunham A."/>
            <person name="Dunn M."/>
            <person name="Durbin K.J."/>
            <person name="Dutta I."/>
            <person name="Eades T."/>
            <person name="Ellwood M."/>
            <person name="Emery-Cohen A."/>
            <person name="Errington H."/>
            <person name="Evans K.L."/>
            <person name="Faulkner L."/>
            <person name="Francis F."/>
            <person name="Frankland J."/>
            <person name="Fraser A.E."/>
            <person name="Galgoczy P."/>
            <person name="Gilbert J."/>
            <person name="Gill R."/>
            <person name="Gloeckner G."/>
            <person name="Gregory S.G."/>
            <person name="Gribble S."/>
            <person name="Griffiths C."/>
            <person name="Grocock R."/>
            <person name="Gu Y."/>
            <person name="Gwilliam R."/>
            <person name="Hamilton C."/>
            <person name="Hart E.A."/>
            <person name="Hawes A."/>
            <person name="Heath P.D."/>
            <person name="Heitmann K."/>
            <person name="Hennig S."/>
            <person name="Hernandez J."/>
            <person name="Hinzmann B."/>
            <person name="Ho S."/>
            <person name="Hoffs M."/>
            <person name="Howden P.J."/>
            <person name="Huckle E.J."/>
            <person name="Hume J."/>
            <person name="Hunt P.J."/>
            <person name="Hunt A.R."/>
            <person name="Isherwood J."/>
            <person name="Jacob L."/>
            <person name="Johnson D."/>
            <person name="Jones S."/>
            <person name="de Jong P.J."/>
            <person name="Joseph S.S."/>
            <person name="Keenan S."/>
            <person name="Kelly S."/>
            <person name="Kershaw J.K."/>
            <person name="Khan Z."/>
            <person name="Kioschis P."/>
            <person name="Klages S."/>
            <person name="Knights A.J."/>
            <person name="Kosiura A."/>
            <person name="Kovar-Smith C."/>
            <person name="Laird G.K."/>
            <person name="Langford C."/>
            <person name="Lawlor S."/>
            <person name="Leversha M."/>
            <person name="Lewis L."/>
            <person name="Liu W."/>
            <person name="Lloyd C."/>
            <person name="Lloyd D.M."/>
            <person name="Loulseged H."/>
            <person name="Loveland J.E."/>
            <person name="Lovell J.D."/>
            <person name="Lozado R."/>
            <person name="Lu J."/>
            <person name="Lyne R."/>
            <person name="Ma J."/>
            <person name="Maheshwari M."/>
            <person name="Matthews L.H."/>
            <person name="McDowall J."/>
            <person name="McLaren S."/>
            <person name="McMurray A."/>
            <person name="Meidl P."/>
            <person name="Meitinger T."/>
            <person name="Milne S."/>
            <person name="Miner G."/>
            <person name="Mistry S.L."/>
            <person name="Morgan M."/>
            <person name="Morris S."/>
            <person name="Mueller I."/>
            <person name="Mullikin J.C."/>
            <person name="Nguyen N."/>
            <person name="Nordsiek G."/>
            <person name="Nyakatura G."/>
            <person name="O'dell C.N."/>
            <person name="Okwuonu G."/>
            <person name="Palmer S."/>
            <person name="Pandian R."/>
            <person name="Parker D."/>
            <person name="Parrish J."/>
            <person name="Pasternak S."/>
            <person name="Patel D."/>
            <person name="Pearce A.V."/>
            <person name="Pearson D.M."/>
            <person name="Pelan S.E."/>
            <person name="Perez L."/>
            <person name="Porter K.M."/>
            <person name="Ramsey Y."/>
            <person name="Reichwald K."/>
            <person name="Rhodes S."/>
            <person name="Ridler K.A."/>
            <person name="Schlessinger D."/>
            <person name="Schueler M.G."/>
            <person name="Sehra H.K."/>
            <person name="Shaw-Smith C."/>
            <person name="Shen H."/>
            <person name="Sheridan E.M."/>
            <person name="Shownkeen R."/>
            <person name="Skuce C.D."/>
            <person name="Smith M.L."/>
            <person name="Sotheran E.C."/>
            <person name="Steingruber H.E."/>
            <person name="Steward C.A."/>
            <person name="Storey R."/>
            <person name="Swann R.M."/>
            <person name="Swarbreck D."/>
            <person name="Tabor P.E."/>
            <person name="Taudien S."/>
            <person name="Taylor T."/>
            <person name="Teague B."/>
            <person name="Thomas K."/>
            <person name="Thorpe A."/>
            <person name="Timms K."/>
            <person name="Tracey A."/>
            <person name="Trevanion S."/>
            <person name="Tromans A.C."/>
            <person name="d'Urso M."/>
            <person name="Verduzco D."/>
            <person name="Villasana D."/>
            <person name="Waldron L."/>
            <person name="Wall M."/>
            <person name="Wang Q."/>
            <person name="Warren J."/>
            <person name="Warry G.L."/>
            <person name="Wei X."/>
            <person name="West A."/>
            <person name="Whitehead S.L."/>
            <person name="Whiteley M.N."/>
            <person name="Wilkinson J.E."/>
            <person name="Willey D.L."/>
            <person name="Williams G."/>
            <person name="Williams L."/>
            <person name="Williamson A."/>
            <person name="Williamson H."/>
            <person name="Wilming L."/>
            <person name="Woodmansey R.L."/>
            <person name="Wray P.W."/>
            <person name="Yen J."/>
            <person name="Zhang J."/>
            <person name="Zhou J."/>
            <person name="Zoghbi H."/>
            <person name="Zorilla S."/>
            <person name="Buck D."/>
            <person name="Reinhardt R."/>
            <person name="Poustka A."/>
            <person name="Rosenthal A."/>
            <person name="Lehrach H."/>
            <person name="Meindl A."/>
            <person name="Minx P.J."/>
            <person name="Hillier L.W."/>
            <person name="Willard H.F."/>
            <person name="Wilson R.K."/>
            <person name="Waterston R.H."/>
            <person name="Rice C.M."/>
            <person name="Vaudin M."/>
            <person name="Coulson A."/>
            <person name="Nelson D.L."/>
            <person name="Weinstock G."/>
            <person name="Sulston J.E."/>
            <person name="Durbin R.M."/>
            <person name="Hubbard T."/>
            <person name="Gibbs R.A."/>
            <person name="Beck S."/>
            <person name="Rogers J."/>
            <person name="Bentley D.R."/>
        </authorList>
    </citation>
    <scope>NUCLEOTIDE SEQUENCE [LARGE SCALE GENOMIC DNA]</scope>
</reference>
<reference key="4">
    <citation type="journal article" date="2004" name="Genome Res.">
        <title>The status, quality, and expansion of the NIH full-length cDNA project: the Mammalian Gene Collection (MGC).</title>
        <authorList>
            <consortium name="The MGC Project Team"/>
        </authorList>
    </citation>
    <scope>NUCLEOTIDE SEQUENCE [LARGE SCALE MRNA] (ISOFORM 2)</scope>
</reference>
<reference key="5">
    <citation type="journal article" date="2011" name="BMC Syst. Biol.">
        <title>Initial characterization of the human central proteome.</title>
        <authorList>
            <person name="Burkard T.R."/>
            <person name="Planyavsky M."/>
            <person name="Kaupe I."/>
            <person name="Breitwieser F.P."/>
            <person name="Buerckstuemmer T."/>
            <person name="Bennett K.L."/>
            <person name="Superti-Furga G."/>
            <person name="Colinge J."/>
        </authorList>
    </citation>
    <scope>IDENTIFICATION BY MASS SPECTROMETRY [LARGE SCALE ANALYSIS]</scope>
</reference>
<reference key="6">
    <citation type="journal article" date="2019" name="Am. J. Hum. Genet.">
        <title>TBC1D8B Loss-of-Function Mutations Lead to X-Linked Nephrotic Syndrome via Defective Trafficking Pathways.</title>
        <authorList>
            <person name="Dorval G."/>
            <person name="Kuzmuk V."/>
            <person name="Gribouval O."/>
            <person name="Welsh G.I."/>
            <person name="Bierzynska A."/>
            <person name="Schmitt A."/>
            <person name="Miserey-Lenkei S."/>
            <person name="Koziell A."/>
            <person name="Haq S."/>
            <person name="Benmerah A."/>
            <person name="Mollet G."/>
            <person name="Boyer O."/>
            <person name="Saleem M.A."/>
            <person name="Antignac C."/>
        </authorList>
    </citation>
    <scope>VARIANTS NPHS20 HIS-246 AND SER-291</scope>
    <scope>CHARACTERIZATION OF VARIANTS NPHS20 HIS-246 AND SER-291</scope>
    <scope>FUNCTION</scope>
    <scope>SUBCELLULAR LOCATION</scope>
    <scope>TISSUE SPECIFICITY</scope>
    <scope>DEVELOPMENTAL STAGE</scope>
    <scope>ALTERNATIVE SPLICING</scope>
    <scope>INTERACTION WITH RAB11B</scope>
</reference>
<evidence type="ECO:0000250" key="1">
    <source>
        <dbReference type="UniProtKB" id="Q96BZ9"/>
    </source>
</evidence>
<evidence type="ECO:0000255" key="2"/>
<evidence type="ECO:0000255" key="3">
    <source>
        <dbReference type="PROSITE-ProRule" id="PRU00163"/>
    </source>
</evidence>
<evidence type="ECO:0000255" key="4">
    <source>
        <dbReference type="PROSITE-ProRule" id="PRU00448"/>
    </source>
</evidence>
<evidence type="ECO:0000256" key="5">
    <source>
        <dbReference type="SAM" id="MobiDB-lite"/>
    </source>
</evidence>
<evidence type="ECO:0000269" key="6">
    <source>
    </source>
</evidence>
<evidence type="ECO:0000269" key="7">
    <source>
    </source>
</evidence>
<evidence type="ECO:0000303" key="8">
    <source>
    </source>
</evidence>
<evidence type="ECO:0000303" key="9">
    <source>
    </source>
</evidence>
<evidence type="ECO:0000303" key="10">
    <source>
    </source>
</evidence>
<evidence type="ECO:0000305" key="11"/>
<organism>
    <name type="scientific">Homo sapiens</name>
    <name type="common">Human</name>
    <dbReference type="NCBI Taxonomy" id="9606"/>
    <lineage>
        <taxon>Eukaryota</taxon>
        <taxon>Metazoa</taxon>
        <taxon>Chordata</taxon>
        <taxon>Craniata</taxon>
        <taxon>Vertebrata</taxon>
        <taxon>Euteleostomi</taxon>
        <taxon>Mammalia</taxon>
        <taxon>Eutheria</taxon>
        <taxon>Euarchontoglires</taxon>
        <taxon>Primates</taxon>
        <taxon>Haplorrhini</taxon>
        <taxon>Catarrhini</taxon>
        <taxon>Hominidae</taxon>
        <taxon>Homo</taxon>
    </lineage>
</organism>
<comment type="function">
    <text evidence="7">Involved in vesicular recycling, probably as a RAB11B GTPase-activating protein.</text>
</comment>
<comment type="subunit">
    <text evidence="7">Interacts (via domain Rab-GAP TBC) with RAB11B (in GTP-bound form).</text>
</comment>
<comment type="subcellular location">
    <subcellularLocation>
        <location evidence="7">Cytoplasm</location>
        <location evidence="7">Cytosol</location>
    </subcellularLocation>
</comment>
<comment type="alternative products">
    <event type="alternative splicing"/>
    <isoform>
        <id>Q0IIM8-1</id>
        <name>1</name>
        <sequence type="displayed"/>
    </isoform>
    <isoform>
        <id>Q0IIM8-2</id>
        <name>2</name>
        <sequence type="described" ref="VSP_033953 VSP_033954"/>
    </isoform>
    <isoform>
        <id>Q0IIM8-3</id>
        <name>3</name>
        <sequence type="described" ref="VSP_043710 VSP_033954"/>
    </isoform>
</comment>
<comment type="tissue specificity">
    <text evidence="7">Kidney (at protein level).</text>
</comment>
<comment type="developmental stage">
    <text evidence="7">Expressed in glomerular podocytes and tubules in the fetal kidney (gestational age 25 weeks)(at protein level).</text>
</comment>
<comment type="domain">
    <text evidence="1">The arginine and glutamine fingers are critical for the GTPase-activating mechanism, they pull out Rab's 'switch 2' glutamine and insert in Rab's active site.</text>
</comment>
<comment type="disease" evidence="7">
    <disease id="DI-05603">
        <name>Nephrotic syndrome 20</name>
        <acronym>NPHS20</acronym>
        <description>A form of nephrotic syndrome, a renal disease clinically characterized by severe proteinuria, resulting in complications such as hypoalbuminemia, hyperlipidemia and edema. Kidney biopsies show non-specific histologic changes such as focal segmental glomerulosclerosis and diffuse mesangial proliferation. Some affected individuals have an inherited steroid-resistant form that progresses to end-stage renal failure. NPHS20 is an X-linked, steroid-resistant form with onset at birth or in the first years of life in affected males. Death in childhood may occur in absence of renal transplantation. Carrier females may be unaffected or have a mild disease with proteinuria.</description>
        <dbReference type="MIM" id="301028"/>
    </disease>
    <text>The disease is caused by variants affecting the gene represented in this entry.</text>
</comment>
<comment type="sequence caution" evidence="11">
    <conflict type="erroneous initiation">
        <sequence resource="EMBL-CDS" id="BAA91071"/>
    </conflict>
</comment>
<name>TBC8B_HUMAN</name>
<protein>
    <recommendedName>
        <fullName>TBC1 domain family member 8B</fullName>
    </recommendedName>
</protein>
<gene>
    <name type="primary">TBC1D8B</name>
</gene>
<dbReference type="EMBL" id="AB449890">
    <property type="protein sequence ID" value="BAH16633.1"/>
    <property type="molecule type" value="mRNA"/>
</dbReference>
<dbReference type="EMBL" id="AB449891">
    <property type="protein sequence ID" value="BAH16634.1"/>
    <property type="molecule type" value="mRNA"/>
</dbReference>
<dbReference type="EMBL" id="AK000305">
    <property type="protein sequence ID" value="BAA91071.1"/>
    <property type="status" value="ALT_INIT"/>
    <property type="molecule type" value="mRNA"/>
</dbReference>
<dbReference type="EMBL" id="AK123957">
    <property type="protein sequence ID" value="BAC85735.1"/>
    <property type="molecule type" value="mRNA"/>
</dbReference>
<dbReference type="EMBL" id="AL391315">
    <property type="status" value="NOT_ANNOTATED_CDS"/>
    <property type="molecule type" value="Genomic_DNA"/>
</dbReference>
<dbReference type="EMBL" id="AL591849">
    <property type="status" value="NOT_ANNOTATED_CDS"/>
    <property type="molecule type" value="Genomic_DNA"/>
</dbReference>
<dbReference type="EMBL" id="BC122564">
    <property type="protein sequence ID" value="AAI22565.1"/>
    <property type="molecule type" value="mRNA"/>
</dbReference>
<dbReference type="CCDS" id="CCDS14522.1">
    <molecule id="Q0IIM8-1"/>
</dbReference>
<dbReference type="CCDS" id="CCDS14523.1">
    <molecule id="Q0IIM8-3"/>
</dbReference>
<dbReference type="RefSeq" id="NP_060222.2">
    <molecule id="Q0IIM8-1"/>
    <property type="nucleotide sequence ID" value="NM_017752.2"/>
</dbReference>
<dbReference type="RefSeq" id="NP_942582.1">
    <molecule id="Q0IIM8-3"/>
    <property type="nucleotide sequence ID" value="NM_198881.2"/>
</dbReference>
<dbReference type="SMR" id="Q0IIM8"/>
<dbReference type="BioGRID" id="120233">
    <property type="interactions" value="8"/>
</dbReference>
<dbReference type="FunCoup" id="Q0IIM8">
    <property type="interactions" value="1060"/>
</dbReference>
<dbReference type="IntAct" id="Q0IIM8">
    <property type="interactions" value="2"/>
</dbReference>
<dbReference type="STRING" id="9606.ENSP00000349781"/>
<dbReference type="iPTMnet" id="Q0IIM8"/>
<dbReference type="PhosphoSitePlus" id="Q0IIM8"/>
<dbReference type="BioMuta" id="TBC1D8B"/>
<dbReference type="DMDM" id="189029914"/>
<dbReference type="jPOST" id="Q0IIM8"/>
<dbReference type="MassIVE" id="Q0IIM8"/>
<dbReference type="PaxDb" id="9606-ENSP00000349781"/>
<dbReference type="PeptideAtlas" id="Q0IIM8"/>
<dbReference type="ProteomicsDB" id="58757">
    <molecule id="Q0IIM8-1"/>
</dbReference>
<dbReference type="ProteomicsDB" id="58758">
    <molecule id="Q0IIM8-2"/>
</dbReference>
<dbReference type="ProteomicsDB" id="58759">
    <molecule id="Q0IIM8-3"/>
</dbReference>
<dbReference type="Pumba" id="Q0IIM8"/>
<dbReference type="Antibodypedia" id="15056">
    <property type="antibodies" value="28 antibodies from 10 providers"/>
</dbReference>
<dbReference type="DNASU" id="54885"/>
<dbReference type="Ensembl" id="ENST00000310452.6">
    <molecule id="Q0IIM8-3"/>
    <property type="protein sequence ID" value="ENSP00000310675.2"/>
    <property type="gene ID" value="ENSG00000133138.20"/>
</dbReference>
<dbReference type="Ensembl" id="ENST00000357242.10">
    <molecule id="Q0IIM8-1"/>
    <property type="protein sequence ID" value="ENSP00000349781.5"/>
    <property type="gene ID" value="ENSG00000133138.20"/>
</dbReference>
<dbReference type="GeneID" id="54885"/>
<dbReference type="KEGG" id="hsa:54885"/>
<dbReference type="MANE-Select" id="ENST00000357242.10">
    <property type="protein sequence ID" value="ENSP00000349781.5"/>
    <property type="RefSeq nucleotide sequence ID" value="NM_017752.3"/>
    <property type="RefSeq protein sequence ID" value="NP_060222.2"/>
</dbReference>
<dbReference type="UCSC" id="uc004emn.5">
    <molecule id="Q0IIM8-1"/>
    <property type="organism name" value="human"/>
</dbReference>
<dbReference type="AGR" id="HGNC:24715"/>
<dbReference type="CTD" id="54885"/>
<dbReference type="DisGeNET" id="54885"/>
<dbReference type="GeneCards" id="TBC1D8B"/>
<dbReference type="HGNC" id="HGNC:24715">
    <property type="gene designation" value="TBC1D8B"/>
</dbReference>
<dbReference type="HPA" id="ENSG00000133138">
    <property type="expression patterns" value="Low tissue specificity"/>
</dbReference>
<dbReference type="MalaCards" id="TBC1D8B"/>
<dbReference type="MIM" id="301027">
    <property type="type" value="gene"/>
</dbReference>
<dbReference type="MIM" id="301028">
    <property type="type" value="phenotype"/>
</dbReference>
<dbReference type="neXtProt" id="NX_Q0IIM8"/>
<dbReference type="OpenTargets" id="ENSG00000133138"/>
<dbReference type="Orphanet" id="656">
    <property type="disease" value="Hereditary steroid-resistant nephrotic syndrome"/>
</dbReference>
<dbReference type="PharmGKB" id="PA145148061"/>
<dbReference type="VEuPathDB" id="HostDB:ENSG00000133138"/>
<dbReference type="eggNOG" id="KOG4347">
    <property type="taxonomic scope" value="Eukaryota"/>
</dbReference>
<dbReference type="GeneTree" id="ENSGT00940000159451"/>
<dbReference type="HOGENOM" id="CLU_024152_0_0_1"/>
<dbReference type="InParanoid" id="Q0IIM8"/>
<dbReference type="OMA" id="GYYTEVV"/>
<dbReference type="OrthoDB" id="17687at2759"/>
<dbReference type="PAN-GO" id="Q0IIM8">
    <property type="GO annotations" value="2 GO annotations based on evolutionary models"/>
</dbReference>
<dbReference type="PhylomeDB" id="Q0IIM8"/>
<dbReference type="TreeFam" id="TF313145"/>
<dbReference type="PathwayCommons" id="Q0IIM8"/>
<dbReference type="Reactome" id="R-HSA-432722">
    <property type="pathway name" value="Golgi Associated Vesicle Biogenesis"/>
</dbReference>
<dbReference type="SignaLink" id="Q0IIM8"/>
<dbReference type="BioGRID-ORCS" id="54885">
    <property type="hits" value="11 hits in 774 CRISPR screens"/>
</dbReference>
<dbReference type="GenomeRNAi" id="54885"/>
<dbReference type="Pharos" id="Q0IIM8">
    <property type="development level" value="Tdark"/>
</dbReference>
<dbReference type="PRO" id="PR:Q0IIM8"/>
<dbReference type="Proteomes" id="UP000005640">
    <property type="component" value="Chromosome X"/>
</dbReference>
<dbReference type="RNAct" id="Q0IIM8">
    <property type="molecule type" value="protein"/>
</dbReference>
<dbReference type="Bgee" id="ENSG00000133138">
    <property type="expression patterns" value="Expressed in right adrenal gland cortex and 168 other cell types or tissues"/>
</dbReference>
<dbReference type="ExpressionAtlas" id="Q0IIM8">
    <property type="expression patterns" value="baseline and differential"/>
</dbReference>
<dbReference type="GO" id="GO:0005829">
    <property type="term" value="C:cytosol"/>
    <property type="evidence" value="ECO:0000314"/>
    <property type="project" value="UniProtKB"/>
</dbReference>
<dbReference type="GO" id="GO:0005509">
    <property type="term" value="F:calcium ion binding"/>
    <property type="evidence" value="ECO:0007669"/>
    <property type="project" value="InterPro"/>
</dbReference>
<dbReference type="GO" id="GO:0005096">
    <property type="term" value="F:GTPase activator activity"/>
    <property type="evidence" value="ECO:0000318"/>
    <property type="project" value="GO_Central"/>
</dbReference>
<dbReference type="GO" id="GO:0003094">
    <property type="term" value="P:glomerular filtration"/>
    <property type="evidence" value="ECO:0000315"/>
    <property type="project" value="UniProtKB"/>
</dbReference>
<dbReference type="GO" id="GO:0016192">
    <property type="term" value="P:vesicle-mediated transport"/>
    <property type="evidence" value="ECO:0000315"/>
    <property type="project" value="UniProtKB"/>
</dbReference>
<dbReference type="CDD" id="cd13350">
    <property type="entry name" value="PH-GRAM1_TBC1D8B"/>
    <property type="match status" value="1"/>
</dbReference>
<dbReference type="CDD" id="cd13352">
    <property type="entry name" value="PH-GRAM2_TBC1D8B"/>
    <property type="match status" value="1"/>
</dbReference>
<dbReference type="FunFam" id="2.30.29.30:FF:000013">
    <property type="entry name" value="Putative TBC1 domain family member 8B"/>
    <property type="match status" value="1"/>
</dbReference>
<dbReference type="FunFam" id="1.10.238.10:FF:000183">
    <property type="entry name" value="TBC1 domain family member 8B"/>
    <property type="match status" value="1"/>
</dbReference>
<dbReference type="FunFam" id="1.10.472.80:FF:000023">
    <property type="entry name" value="TBC1 domain family member 8B"/>
    <property type="match status" value="1"/>
</dbReference>
<dbReference type="FunFam" id="2.30.29.30:FF:000185">
    <property type="entry name" value="TBC1 domain family member 8B"/>
    <property type="match status" value="1"/>
</dbReference>
<dbReference type="FunFam" id="1.10.8.270:FF:000002">
    <property type="entry name" value="TBC1 domain family member 9B"/>
    <property type="match status" value="1"/>
</dbReference>
<dbReference type="Gene3D" id="1.10.238.10">
    <property type="entry name" value="EF-hand"/>
    <property type="match status" value="1"/>
</dbReference>
<dbReference type="Gene3D" id="2.30.29.30">
    <property type="entry name" value="Pleckstrin-homology domain (PH domain)/Phosphotyrosine-binding domain (PTB)"/>
    <property type="match status" value="2"/>
</dbReference>
<dbReference type="Gene3D" id="1.10.8.270">
    <property type="entry name" value="putative rabgap domain of human tbc1 domain family member 14 like domains"/>
    <property type="match status" value="1"/>
</dbReference>
<dbReference type="Gene3D" id="1.10.10.750">
    <property type="entry name" value="Ypt/Rab-GAP domain of gyp1p, domain 1"/>
    <property type="match status" value="1"/>
</dbReference>
<dbReference type="Gene3D" id="1.10.472.80">
    <property type="entry name" value="Ypt/Rab-GAP domain of gyp1p, domain 3"/>
    <property type="match status" value="1"/>
</dbReference>
<dbReference type="InterPro" id="IPR011992">
    <property type="entry name" value="EF-hand-dom_pair"/>
</dbReference>
<dbReference type="InterPro" id="IPR002048">
    <property type="entry name" value="EF_hand_dom"/>
</dbReference>
<dbReference type="InterPro" id="IPR004182">
    <property type="entry name" value="GRAM"/>
</dbReference>
<dbReference type="InterPro" id="IPR011993">
    <property type="entry name" value="PH-like_dom_sf"/>
</dbReference>
<dbReference type="InterPro" id="IPR000195">
    <property type="entry name" value="Rab-GAP-TBC_dom"/>
</dbReference>
<dbReference type="InterPro" id="IPR035969">
    <property type="entry name" value="Rab-GAP_TBC_sf"/>
</dbReference>
<dbReference type="InterPro" id="IPR036012">
    <property type="entry name" value="TBC1D8B_PH-GRAM1"/>
</dbReference>
<dbReference type="InterPro" id="IPR036015">
    <property type="entry name" value="TBC1D8B_PH-GRAM2"/>
</dbReference>
<dbReference type="PANTHER" id="PTHR47666">
    <property type="entry name" value="PROTEIN VASCULAR ASSOCIATED DEATH 1, CHLOROPLASTIC"/>
    <property type="match status" value="1"/>
</dbReference>
<dbReference type="PANTHER" id="PTHR47666:SF4">
    <property type="entry name" value="TBC1 DOMAIN FAMILY MEMBER 8B"/>
    <property type="match status" value="1"/>
</dbReference>
<dbReference type="Pfam" id="PF02893">
    <property type="entry name" value="GRAM"/>
    <property type="match status" value="2"/>
</dbReference>
<dbReference type="Pfam" id="PF00566">
    <property type="entry name" value="RabGAP-TBC"/>
    <property type="match status" value="1"/>
</dbReference>
<dbReference type="SMART" id="SM00568">
    <property type="entry name" value="GRAM"/>
    <property type="match status" value="2"/>
</dbReference>
<dbReference type="SMART" id="SM00164">
    <property type="entry name" value="TBC"/>
    <property type="match status" value="1"/>
</dbReference>
<dbReference type="SUPFAM" id="SSF47473">
    <property type="entry name" value="EF-hand"/>
    <property type="match status" value="1"/>
</dbReference>
<dbReference type="SUPFAM" id="SSF47923">
    <property type="entry name" value="Ypt/Rab-GAP domain of gyp1p"/>
    <property type="match status" value="2"/>
</dbReference>
<dbReference type="PROSITE" id="PS00018">
    <property type="entry name" value="EF_HAND_1"/>
    <property type="match status" value="1"/>
</dbReference>
<dbReference type="PROSITE" id="PS50222">
    <property type="entry name" value="EF_HAND_2"/>
    <property type="match status" value="1"/>
</dbReference>
<dbReference type="PROSITE" id="PS50086">
    <property type="entry name" value="TBC_RABGAP"/>
    <property type="match status" value="1"/>
</dbReference>
<proteinExistence type="evidence at protein level"/>
<accession>Q0IIM8</accession>
<accession>B9A6K5</accession>
<accession>B9A6K6</accession>
<accession>Q5JRB7</accession>
<accession>Q6ZVX5</accession>
<accession>Q9NXE3</accession>
<feature type="chain" id="PRO_0000337183" description="TBC1 domain family member 8B">
    <location>
        <begin position="1"/>
        <end position="1120"/>
    </location>
</feature>
<feature type="domain" description="GRAM 1" evidence="2">
    <location>
        <begin position="145"/>
        <end position="212"/>
    </location>
</feature>
<feature type="domain" description="GRAM 2" evidence="2">
    <location>
        <begin position="285"/>
        <end position="353"/>
    </location>
</feature>
<feature type="domain" description="Rab-GAP TBC" evidence="3">
    <location>
        <begin position="487"/>
        <end position="674"/>
    </location>
</feature>
<feature type="domain" description="EF-hand" evidence="4">
    <location>
        <begin position="858"/>
        <end position="893"/>
    </location>
</feature>
<feature type="region of interest" description="Disordered" evidence="5">
    <location>
        <begin position="1035"/>
        <end position="1066"/>
    </location>
</feature>
<feature type="compositionally biased region" description="Basic and acidic residues" evidence="5">
    <location>
        <begin position="1054"/>
        <end position="1066"/>
    </location>
</feature>
<feature type="site" description="Arginine finger" evidence="1">
    <location>
        <position position="534"/>
    </location>
</feature>
<feature type="site" description="Glutamine finger" evidence="1">
    <location>
        <position position="573"/>
    </location>
</feature>
<feature type="splice variant" id="VSP_033953" description="In isoform 2." evidence="8 9">
    <original>ALVDQAVFEELIRDHLPQL</original>
    <variation>SDDFMPLVRIQGQCVIG</variation>
    <location>
        <begin position="614"/>
        <end position="632"/>
    </location>
</feature>
<feature type="splice variant" id="VSP_043710" description="In isoform 3." evidence="10">
    <original>ALVDQAVFEELIRDHLPQL</original>
    <variation>SDDFMPLVRIQGQCVIGEK</variation>
    <location>
        <begin position="614"/>
        <end position="632"/>
    </location>
</feature>
<feature type="splice variant" id="VSP_033954" description="In isoform 2 and isoform 3." evidence="8 9 10">
    <location>
        <begin position="633"/>
        <end position="1120"/>
    </location>
</feature>
<feature type="sequence variant" id="VAR_082286" description="In NPHS20; rescues only partially glomerular filtration defects in tbc1d8b knockout fish; defective vesicular trafficking in podocytes; dbSNP:rs761410195." evidence="6">
    <original>Q</original>
    <variation>H</variation>
    <location>
        <position position="246"/>
    </location>
</feature>
<feature type="sequence variant" id="VAR_082287" description="In NPHS20; exhibits intracellular vesicular localization; rescues only partially glomerular filtration defects in tbc1d8b knockout fish; reduced podocyte migration; defective vesicular trafficking in podocytes; dbSNP:rs1602413491." evidence="6">
    <original>F</original>
    <variation>S</variation>
    <location>
        <position position="291"/>
    </location>
</feature>
<feature type="sequence conflict" description="In Ref. 2; BAC85735." evidence="11" ref="2">
    <original>A</original>
    <variation>V</variation>
    <location>
        <position position="503"/>
    </location>
</feature>
<feature type="sequence conflict" description="In Ref. 2; BAA91071." evidence="11" ref="2">
    <original>Y</original>
    <variation>C</variation>
    <location>
        <position position="891"/>
    </location>
</feature>